<gene>
    <name evidence="1" type="primary">rsmA</name>
    <name evidence="1" type="synonym">ksgA</name>
    <name type="ordered locus">SSPA0087</name>
</gene>
<keyword id="KW-0963">Cytoplasm</keyword>
<keyword id="KW-0489">Methyltransferase</keyword>
<keyword id="KW-0694">RNA-binding</keyword>
<keyword id="KW-0698">rRNA processing</keyword>
<keyword id="KW-0949">S-adenosyl-L-methionine</keyword>
<keyword id="KW-0808">Transferase</keyword>
<accession>B5BL27</accession>
<dbReference type="EC" id="2.1.1.182" evidence="1"/>
<dbReference type="EMBL" id="FM200053">
    <property type="protein sequence ID" value="CAR58198.1"/>
    <property type="molecule type" value="Genomic_DNA"/>
</dbReference>
<dbReference type="RefSeq" id="WP_001065397.1">
    <property type="nucleotide sequence ID" value="NC_011147.1"/>
</dbReference>
<dbReference type="SMR" id="B5BL27"/>
<dbReference type="KEGG" id="sek:SSPA0087"/>
<dbReference type="HOGENOM" id="CLU_041220_0_1_6"/>
<dbReference type="Proteomes" id="UP000001869">
    <property type="component" value="Chromosome"/>
</dbReference>
<dbReference type="GO" id="GO:0005829">
    <property type="term" value="C:cytosol"/>
    <property type="evidence" value="ECO:0007669"/>
    <property type="project" value="TreeGrafter"/>
</dbReference>
<dbReference type="GO" id="GO:0052908">
    <property type="term" value="F:16S rRNA (adenine(1518)-N(6)/adenine(1519)-N(6))-dimethyltransferase activity"/>
    <property type="evidence" value="ECO:0007669"/>
    <property type="project" value="UniProtKB-EC"/>
</dbReference>
<dbReference type="GO" id="GO:0003723">
    <property type="term" value="F:RNA binding"/>
    <property type="evidence" value="ECO:0007669"/>
    <property type="project" value="UniProtKB-KW"/>
</dbReference>
<dbReference type="FunFam" id="1.10.8.100:FF:000001">
    <property type="entry name" value="Ribosomal RNA small subunit methyltransferase A"/>
    <property type="match status" value="1"/>
</dbReference>
<dbReference type="FunFam" id="3.40.50.150:FF:000006">
    <property type="entry name" value="Ribosomal RNA small subunit methyltransferase A"/>
    <property type="match status" value="1"/>
</dbReference>
<dbReference type="Gene3D" id="1.10.8.100">
    <property type="entry name" value="Ribosomal RNA adenine dimethylase-like, domain 2"/>
    <property type="match status" value="1"/>
</dbReference>
<dbReference type="Gene3D" id="3.40.50.150">
    <property type="entry name" value="Vaccinia Virus protein VP39"/>
    <property type="match status" value="1"/>
</dbReference>
<dbReference type="HAMAP" id="MF_00607">
    <property type="entry name" value="16SrRNA_methyltr_A"/>
    <property type="match status" value="1"/>
</dbReference>
<dbReference type="InterPro" id="IPR001737">
    <property type="entry name" value="KsgA/Erm"/>
</dbReference>
<dbReference type="InterPro" id="IPR023165">
    <property type="entry name" value="rRNA_Ade_diMease-like_C"/>
</dbReference>
<dbReference type="InterPro" id="IPR020596">
    <property type="entry name" value="rRNA_Ade_Mease_Trfase_CS"/>
</dbReference>
<dbReference type="InterPro" id="IPR020598">
    <property type="entry name" value="rRNA_Ade_methylase_Trfase_N"/>
</dbReference>
<dbReference type="InterPro" id="IPR011530">
    <property type="entry name" value="rRNA_adenine_dimethylase"/>
</dbReference>
<dbReference type="InterPro" id="IPR029063">
    <property type="entry name" value="SAM-dependent_MTases_sf"/>
</dbReference>
<dbReference type="NCBIfam" id="TIGR00755">
    <property type="entry name" value="ksgA"/>
    <property type="match status" value="1"/>
</dbReference>
<dbReference type="PANTHER" id="PTHR11727">
    <property type="entry name" value="DIMETHYLADENOSINE TRANSFERASE"/>
    <property type="match status" value="1"/>
</dbReference>
<dbReference type="PANTHER" id="PTHR11727:SF7">
    <property type="entry name" value="DIMETHYLADENOSINE TRANSFERASE-RELATED"/>
    <property type="match status" value="1"/>
</dbReference>
<dbReference type="Pfam" id="PF00398">
    <property type="entry name" value="RrnaAD"/>
    <property type="match status" value="1"/>
</dbReference>
<dbReference type="SMART" id="SM00650">
    <property type="entry name" value="rADc"/>
    <property type="match status" value="1"/>
</dbReference>
<dbReference type="SUPFAM" id="SSF53335">
    <property type="entry name" value="S-adenosyl-L-methionine-dependent methyltransferases"/>
    <property type="match status" value="1"/>
</dbReference>
<dbReference type="PROSITE" id="PS01131">
    <property type="entry name" value="RRNA_A_DIMETH"/>
    <property type="match status" value="1"/>
</dbReference>
<dbReference type="PROSITE" id="PS51689">
    <property type="entry name" value="SAM_RNA_A_N6_MT"/>
    <property type="match status" value="1"/>
</dbReference>
<proteinExistence type="inferred from homology"/>
<feature type="chain" id="PRO_1000130319" description="Ribosomal RNA small subunit methyltransferase A">
    <location>
        <begin position="1"/>
        <end position="273"/>
    </location>
</feature>
<feature type="binding site" evidence="1">
    <location>
        <position position="18"/>
    </location>
    <ligand>
        <name>S-adenosyl-L-methionine</name>
        <dbReference type="ChEBI" id="CHEBI:59789"/>
    </ligand>
</feature>
<feature type="binding site" evidence="1">
    <location>
        <position position="20"/>
    </location>
    <ligand>
        <name>S-adenosyl-L-methionine</name>
        <dbReference type="ChEBI" id="CHEBI:59789"/>
    </ligand>
</feature>
<feature type="binding site" evidence="1">
    <location>
        <position position="45"/>
    </location>
    <ligand>
        <name>S-adenosyl-L-methionine</name>
        <dbReference type="ChEBI" id="CHEBI:59789"/>
    </ligand>
</feature>
<feature type="binding site" evidence="1">
    <location>
        <position position="66"/>
    </location>
    <ligand>
        <name>S-adenosyl-L-methionine</name>
        <dbReference type="ChEBI" id="CHEBI:59789"/>
    </ligand>
</feature>
<feature type="binding site" evidence="1">
    <location>
        <position position="91"/>
    </location>
    <ligand>
        <name>S-adenosyl-L-methionine</name>
        <dbReference type="ChEBI" id="CHEBI:59789"/>
    </ligand>
</feature>
<feature type="binding site" evidence="1">
    <location>
        <position position="113"/>
    </location>
    <ligand>
        <name>S-adenosyl-L-methionine</name>
        <dbReference type="ChEBI" id="CHEBI:59789"/>
    </ligand>
</feature>
<evidence type="ECO:0000255" key="1">
    <source>
        <dbReference type="HAMAP-Rule" id="MF_00607"/>
    </source>
</evidence>
<sequence>MNNRVHQGHLARKRFGQNFLNDRFVIDSIVSAINPQKGQAMVEIGPGLAALTEPVGERLDKLTVIELDRDLAARLQTHPFLGPKLTIYQQDAMTMNFGELSAQLGQPLRVFGNLPYNISTPLMFHLFSYTDAIADMHFMLQKEVVNRLVAGPNSKAYGRLSVMAQYYCQVIPVLEVPPSAFTPPPKVDSAVVRLVPHATMPYPVKDIRVLSRITTEAFNQRRKTIRNSLGNLFSVETLTEMGIDPAMRAENISVAQYCQMANYLSENAPLKES</sequence>
<reference key="1">
    <citation type="journal article" date="2009" name="BMC Genomics">
        <title>Pseudogene accumulation in the evolutionary histories of Salmonella enterica serovars Paratyphi A and Typhi.</title>
        <authorList>
            <person name="Holt K.E."/>
            <person name="Thomson N.R."/>
            <person name="Wain J."/>
            <person name="Langridge G.C."/>
            <person name="Hasan R."/>
            <person name="Bhutta Z.A."/>
            <person name="Quail M.A."/>
            <person name="Norbertczak H."/>
            <person name="Walker D."/>
            <person name="Simmonds M."/>
            <person name="White B."/>
            <person name="Bason N."/>
            <person name="Mungall K."/>
            <person name="Dougan G."/>
            <person name="Parkhill J."/>
        </authorList>
    </citation>
    <scope>NUCLEOTIDE SEQUENCE [LARGE SCALE GENOMIC DNA]</scope>
    <source>
        <strain>AKU_12601</strain>
    </source>
</reference>
<name>RSMA_SALPK</name>
<protein>
    <recommendedName>
        <fullName evidence="1">Ribosomal RNA small subunit methyltransferase A</fullName>
        <ecNumber evidence="1">2.1.1.182</ecNumber>
    </recommendedName>
    <alternativeName>
        <fullName evidence="1">16S rRNA (adenine(1518)-N(6)/adenine(1519)-N(6))-dimethyltransferase</fullName>
    </alternativeName>
    <alternativeName>
        <fullName evidence="1">16S rRNA dimethyladenosine transferase</fullName>
    </alternativeName>
    <alternativeName>
        <fullName evidence="1">16S rRNA dimethylase</fullName>
    </alternativeName>
    <alternativeName>
        <fullName evidence="1">S-adenosylmethionine-6-N', N'-adenosyl(rRNA) dimethyltransferase</fullName>
    </alternativeName>
</protein>
<organism>
    <name type="scientific">Salmonella paratyphi A (strain AKU_12601)</name>
    <dbReference type="NCBI Taxonomy" id="554290"/>
    <lineage>
        <taxon>Bacteria</taxon>
        <taxon>Pseudomonadati</taxon>
        <taxon>Pseudomonadota</taxon>
        <taxon>Gammaproteobacteria</taxon>
        <taxon>Enterobacterales</taxon>
        <taxon>Enterobacteriaceae</taxon>
        <taxon>Salmonella</taxon>
    </lineage>
</organism>
<comment type="function">
    <text evidence="1">Specifically dimethylates two adjacent adenosines (A1518 and A1519) in the loop of a conserved hairpin near the 3'-end of 16S rRNA in the 30S particle. May play a critical role in biogenesis of 30S subunits.</text>
</comment>
<comment type="catalytic activity">
    <reaction evidence="1">
        <text>adenosine(1518)/adenosine(1519) in 16S rRNA + 4 S-adenosyl-L-methionine = N(6)-dimethyladenosine(1518)/N(6)-dimethyladenosine(1519) in 16S rRNA + 4 S-adenosyl-L-homocysteine + 4 H(+)</text>
        <dbReference type="Rhea" id="RHEA:19609"/>
        <dbReference type="Rhea" id="RHEA-COMP:10232"/>
        <dbReference type="Rhea" id="RHEA-COMP:10233"/>
        <dbReference type="ChEBI" id="CHEBI:15378"/>
        <dbReference type="ChEBI" id="CHEBI:57856"/>
        <dbReference type="ChEBI" id="CHEBI:59789"/>
        <dbReference type="ChEBI" id="CHEBI:74411"/>
        <dbReference type="ChEBI" id="CHEBI:74493"/>
        <dbReference type="EC" id="2.1.1.182"/>
    </reaction>
</comment>
<comment type="subcellular location">
    <subcellularLocation>
        <location evidence="1">Cytoplasm</location>
    </subcellularLocation>
</comment>
<comment type="similarity">
    <text evidence="1">Belongs to the class I-like SAM-binding methyltransferase superfamily. rRNA adenine N(6)-methyltransferase family. RsmA subfamily.</text>
</comment>